<name>SAU61_ARATH</name>
<proteinExistence type="evidence at transcript level"/>
<comment type="function">
    <text evidence="1">May promote auxin-stimulated organ elongation, such as hypocotyls, stamen filaments and petals.</text>
</comment>
<comment type="subcellular location">
    <subcellularLocation>
        <location evidence="1">Cell membrane</location>
        <topology evidence="1">Peripheral membrane protein</topology>
    </subcellularLocation>
</comment>
<comment type="similarity">
    <text evidence="3">Belongs to the ARG7 family.</text>
</comment>
<comment type="sequence caution" evidence="3">
    <conflict type="erroneous initiation">
        <sequence resource="EMBL-CDS" id="AAG51732"/>
    </conflict>
    <text>Truncated N-terminus.</text>
</comment>
<protein>
    <recommendedName>
        <fullName evidence="3">Auxin-responsive protein SAUR61</fullName>
    </recommendedName>
    <alternativeName>
        <fullName evidence="2">Protein SMALL AUXIN UP RNA 61</fullName>
    </alternativeName>
</protein>
<organism>
    <name type="scientific">Arabidopsis thaliana</name>
    <name type="common">Mouse-ear cress</name>
    <dbReference type="NCBI Taxonomy" id="3702"/>
    <lineage>
        <taxon>Eukaryota</taxon>
        <taxon>Viridiplantae</taxon>
        <taxon>Streptophyta</taxon>
        <taxon>Embryophyta</taxon>
        <taxon>Tracheophyta</taxon>
        <taxon>Spermatophyta</taxon>
        <taxon>Magnoliopsida</taxon>
        <taxon>eudicotyledons</taxon>
        <taxon>Gunneridae</taxon>
        <taxon>Pentapetalae</taxon>
        <taxon>rosids</taxon>
        <taxon>malvids</taxon>
        <taxon>Brassicales</taxon>
        <taxon>Brassicaceae</taxon>
        <taxon>Camelineae</taxon>
        <taxon>Arabidopsis</taxon>
    </lineage>
</organism>
<keyword id="KW-0927">Auxin signaling pathway</keyword>
<keyword id="KW-1003">Cell membrane</keyword>
<keyword id="KW-0217">Developmental protein</keyword>
<keyword id="KW-0341">Growth regulation</keyword>
<keyword id="KW-0472">Membrane</keyword>
<keyword id="KW-1185">Reference proteome</keyword>
<gene>
    <name evidence="2" type="primary">SAUR61</name>
    <name evidence="4" type="ordered locus">At1g29420</name>
    <name evidence="5" type="ORF">F15D2.32</name>
</gene>
<accession>Q6NMM0</accession>
<accession>Q9C7Q9</accession>
<feature type="chain" id="PRO_0000433073" description="Auxin-responsive protein SAUR61">
    <location>
        <begin position="1"/>
        <end position="141"/>
    </location>
</feature>
<reference key="1">
    <citation type="journal article" date="2000" name="Nature">
        <title>Sequence and analysis of chromosome 1 of the plant Arabidopsis thaliana.</title>
        <authorList>
            <person name="Theologis A."/>
            <person name="Ecker J.R."/>
            <person name="Palm C.J."/>
            <person name="Federspiel N.A."/>
            <person name="Kaul S."/>
            <person name="White O."/>
            <person name="Alonso J."/>
            <person name="Altafi H."/>
            <person name="Araujo R."/>
            <person name="Bowman C.L."/>
            <person name="Brooks S.Y."/>
            <person name="Buehler E."/>
            <person name="Chan A."/>
            <person name="Chao Q."/>
            <person name="Chen H."/>
            <person name="Cheuk R.F."/>
            <person name="Chin C.W."/>
            <person name="Chung M.K."/>
            <person name="Conn L."/>
            <person name="Conway A.B."/>
            <person name="Conway A.R."/>
            <person name="Creasy T.H."/>
            <person name="Dewar K."/>
            <person name="Dunn P."/>
            <person name="Etgu P."/>
            <person name="Feldblyum T.V."/>
            <person name="Feng J.-D."/>
            <person name="Fong B."/>
            <person name="Fujii C.Y."/>
            <person name="Gill J.E."/>
            <person name="Goldsmith A.D."/>
            <person name="Haas B."/>
            <person name="Hansen N.F."/>
            <person name="Hughes B."/>
            <person name="Huizar L."/>
            <person name="Hunter J.L."/>
            <person name="Jenkins J."/>
            <person name="Johnson-Hopson C."/>
            <person name="Khan S."/>
            <person name="Khaykin E."/>
            <person name="Kim C.J."/>
            <person name="Koo H.L."/>
            <person name="Kremenetskaia I."/>
            <person name="Kurtz D.B."/>
            <person name="Kwan A."/>
            <person name="Lam B."/>
            <person name="Langin-Hooper S."/>
            <person name="Lee A."/>
            <person name="Lee J.M."/>
            <person name="Lenz C.A."/>
            <person name="Li J.H."/>
            <person name="Li Y.-P."/>
            <person name="Lin X."/>
            <person name="Liu S.X."/>
            <person name="Liu Z.A."/>
            <person name="Luros J.S."/>
            <person name="Maiti R."/>
            <person name="Marziali A."/>
            <person name="Militscher J."/>
            <person name="Miranda M."/>
            <person name="Nguyen M."/>
            <person name="Nierman W.C."/>
            <person name="Osborne B.I."/>
            <person name="Pai G."/>
            <person name="Peterson J."/>
            <person name="Pham P.K."/>
            <person name="Rizzo M."/>
            <person name="Rooney T."/>
            <person name="Rowley D."/>
            <person name="Sakano H."/>
            <person name="Salzberg S.L."/>
            <person name="Schwartz J.R."/>
            <person name="Shinn P."/>
            <person name="Southwick A.M."/>
            <person name="Sun H."/>
            <person name="Tallon L.J."/>
            <person name="Tambunga G."/>
            <person name="Toriumi M.J."/>
            <person name="Town C.D."/>
            <person name="Utterback T."/>
            <person name="Van Aken S."/>
            <person name="Vaysberg M."/>
            <person name="Vysotskaia V.S."/>
            <person name="Walker M."/>
            <person name="Wu D."/>
            <person name="Yu G."/>
            <person name="Fraser C.M."/>
            <person name="Venter J.C."/>
            <person name="Davis R.W."/>
        </authorList>
    </citation>
    <scope>NUCLEOTIDE SEQUENCE [LARGE SCALE GENOMIC DNA]</scope>
    <source>
        <strain>cv. Columbia</strain>
    </source>
</reference>
<reference key="2">
    <citation type="journal article" date="2017" name="Plant J.">
        <title>Araport11: a complete reannotation of the Arabidopsis thaliana reference genome.</title>
        <authorList>
            <person name="Cheng C.Y."/>
            <person name="Krishnakumar V."/>
            <person name="Chan A.P."/>
            <person name="Thibaud-Nissen F."/>
            <person name="Schobel S."/>
            <person name="Town C.D."/>
        </authorList>
    </citation>
    <scope>GENOME REANNOTATION</scope>
    <source>
        <strain>cv. Columbia</strain>
    </source>
</reference>
<reference key="3">
    <citation type="submission" date="2004-02" db="EMBL/GenBank/DDBJ databases">
        <title>Arabidopsis ORF clones.</title>
        <authorList>
            <person name="Kim C.J."/>
            <person name="Chen H."/>
            <person name="Cheuk R.F."/>
            <person name="Shinn P."/>
            <person name="Ecker J.R."/>
        </authorList>
    </citation>
    <scope>NUCLEOTIDE SEQUENCE [LARGE SCALE MRNA]</scope>
    <source>
        <strain>cv. Columbia</strain>
    </source>
</reference>
<reference key="4">
    <citation type="journal article" date="2002" name="Plant Mol. Biol.">
        <title>Auxin-responsive gene expression: genes, promoters and regulatory factors.</title>
        <authorList>
            <person name="Hagen G."/>
            <person name="Guilfoyle T.J."/>
        </authorList>
    </citation>
    <scope>GENE FAMILY</scope>
    <scope>NOMENCLATURE</scope>
</reference>
<evidence type="ECO:0000250" key="1">
    <source>
        <dbReference type="UniProtKB" id="F4I1H5"/>
    </source>
</evidence>
<evidence type="ECO:0000303" key="2">
    <source>
    </source>
</evidence>
<evidence type="ECO:0000305" key="3"/>
<evidence type="ECO:0000312" key="4">
    <source>
        <dbReference type="Araport" id="AT1G29420"/>
    </source>
</evidence>
<evidence type="ECO:0000312" key="5">
    <source>
        <dbReference type="EMBL" id="AAG51732.1"/>
    </source>
</evidence>
<sequence length="141" mass="16192">MMNTKKLLKMAKKWQQRAALRRKRISFHRSTDTTSSSTAAEKGCFVVYTSDRIRFAFPISYLSNSVIQELLKISEEEFGIPTEGPITLPFDSVFLEYLIRLVQRRMDGDTEKALITSISSTRCSLPCSFQLQEHSSTRLVF</sequence>
<dbReference type="EMBL" id="AC068667">
    <property type="protein sequence ID" value="AAG51732.1"/>
    <property type="status" value="ALT_INIT"/>
    <property type="molecule type" value="Genomic_DNA"/>
</dbReference>
<dbReference type="EMBL" id="CP002684">
    <property type="protein sequence ID" value="AEE31087.1"/>
    <property type="molecule type" value="Genomic_DNA"/>
</dbReference>
<dbReference type="EMBL" id="BT010938">
    <property type="protein sequence ID" value="AAR24716.1"/>
    <property type="molecule type" value="mRNA"/>
</dbReference>
<dbReference type="EMBL" id="BT011637">
    <property type="protein sequence ID" value="AAS47643.1"/>
    <property type="molecule type" value="mRNA"/>
</dbReference>
<dbReference type="PIR" id="H86416">
    <property type="entry name" value="H86416"/>
</dbReference>
<dbReference type="RefSeq" id="NP_174235.2">
    <property type="nucleotide sequence ID" value="NM_102682.4"/>
</dbReference>
<dbReference type="FunCoup" id="Q6NMM0">
    <property type="interactions" value="75"/>
</dbReference>
<dbReference type="STRING" id="3702.Q6NMM0"/>
<dbReference type="PaxDb" id="3702-AT1G29420.1"/>
<dbReference type="EnsemblPlants" id="AT1G29420.1">
    <property type="protein sequence ID" value="AT1G29420.1"/>
    <property type="gene ID" value="AT1G29420"/>
</dbReference>
<dbReference type="GeneID" id="839818"/>
<dbReference type="Gramene" id="AT1G29420.1">
    <property type="protein sequence ID" value="AT1G29420.1"/>
    <property type="gene ID" value="AT1G29420"/>
</dbReference>
<dbReference type="KEGG" id="ath:AT1G29420"/>
<dbReference type="Araport" id="AT1G29420"/>
<dbReference type="TAIR" id="AT1G29420">
    <property type="gene designation" value="SAUR61"/>
</dbReference>
<dbReference type="eggNOG" id="ENOG502S4GQ">
    <property type="taxonomic scope" value="Eukaryota"/>
</dbReference>
<dbReference type="HOGENOM" id="CLU_090137_1_1_1"/>
<dbReference type="InParanoid" id="Q6NMM0"/>
<dbReference type="OMA" id="LLMEYIV"/>
<dbReference type="PhylomeDB" id="Q6NMM0"/>
<dbReference type="PRO" id="PR:Q6NMM0"/>
<dbReference type="Proteomes" id="UP000006548">
    <property type="component" value="Chromosome 1"/>
</dbReference>
<dbReference type="ExpressionAtlas" id="Q6NMM0">
    <property type="expression patterns" value="baseline and differential"/>
</dbReference>
<dbReference type="GO" id="GO:0005886">
    <property type="term" value="C:plasma membrane"/>
    <property type="evidence" value="ECO:0007669"/>
    <property type="project" value="UniProtKB-SubCell"/>
</dbReference>
<dbReference type="GO" id="GO:0009734">
    <property type="term" value="P:auxin-activated signaling pathway"/>
    <property type="evidence" value="ECO:0007669"/>
    <property type="project" value="UniProtKB-KW"/>
</dbReference>
<dbReference type="InterPro" id="IPR003676">
    <property type="entry name" value="SAUR_fam"/>
</dbReference>
<dbReference type="PANTHER" id="PTHR31175">
    <property type="entry name" value="AUXIN-RESPONSIVE FAMILY PROTEIN"/>
    <property type="match status" value="1"/>
</dbReference>
<dbReference type="PANTHER" id="PTHR31175:SF99">
    <property type="entry name" value="AUXIN-RESPONSIVE PROTEIN SAUR61-RELATED"/>
    <property type="match status" value="1"/>
</dbReference>
<dbReference type="Pfam" id="PF02519">
    <property type="entry name" value="Auxin_inducible"/>
    <property type="match status" value="1"/>
</dbReference>